<evidence type="ECO:0000250" key="1">
    <source>
        <dbReference type="UniProtKB" id="D4N500"/>
    </source>
</evidence>
<evidence type="ECO:0000250" key="2">
    <source>
        <dbReference type="UniProtKB" id="Q9C899"/>
    </source>
</evidence>
<evidence type="ECO:0000255" key="3">
    <source>
        <dbReference type="PROSITE-ProRule" id="PRU00805"/>
    </source>
</evidence>
<evidence type="ECO:0000269" key="4">
    <source>
    </source>
</evidence>
<evidence type="ECO:0000303" key="5">
    <source>
    </source>
</evidence>
<evidence type="ECO:0000305" key="6"/>
<protein>
    <recommendedName>
        <fullName evidence="5">Bi-functional coumaroyl CoA and feruloyl CoA ortho-hydroxylase F6H2-2-1</fullName>
        <shortName evidence="5">IbF6H2-2-1</shortName>
        <ecNumber evidence="3 4">1.14.11.61</ecNumber>
        <ecNumber evidence="3 4">1.14.11.62</ecNumber>
    </recommendedName>
    <alternativeName>
        <fullName evidence="5">2-oxoglutarate-dependent dioxygenase F6H2-2-1</fullName>
        <shortName evidence="5">2OGD F6H2-2-1</shortName>
    </alternativeName>
</protein>
<sequence length="358" mass="40405">MPSTTLSTVLSDINDFVVKQGHGVKGLSELGLQTLPNQYVHPPEERLSSMDVVSDDSIPVIDVSNWEDPKVAKLICDAAEKRGFFQIVNHGIPIEMLEKAKAATYRFFREPAEEKKKYSKENCPTSHVRYSTSFLPQIEKALEWKDHLSMFYVSDEEAAQYWPPSCRDDAVEYLKSCEMVSRKLLEALMQGLNVNQIDDSKESLLMGSRRININYYPKCPNPDLTVGVGRHSDISTLTLLLQDDIGGLYVRKLEHEAWSHVPPVKGALVINIGDALQIMSNGRYKSIEHRVMANESNDRISVPVFVNPRPNDIVGPLPEVLASGEKPVYKPVLYSDYAKHFYRKAHNGKDTIAFARIE</sequence>
<gene>
    <name evidence="5" type="primary">F6H2-2-1</name>
</gene>
<keyword id="KW-0223">Dioxygenase</keyword>
<keyword id="KW-0408">Iron</keyword>
<keyword id="KW-0479">Metal-binding</keyword>
<keyword id="KW-0560">Oxidoreductase</keyword>
<organism>
    <name type="scientific">Ipomoea batatas</name>
    <name type="common">Sweet potato</name>
    <name type="synonym">Convolvulus batatas</name>
    <dbReference type="NCBI Taxonomy" id="4120"/>
    <lineage>
        <taxon>Eukaryota</taxon>
        <taxon>Viridiplantae</taxon>
        <taxon>Streptophyta</taxon>
        <taxon>Embryophyta</taxon>
        <taxon>Tracheophyta</taxon>
        <taxon>Spermatophyta</taxon>
        <taxon>Magnoliopsida</taxon>
        <taxon>eudicotyledons</taxon>
        <taxon>Gunneridae</taxon>
        <taxon>Pentapetalae</taxon>
        <taxon>asterids</taxon>
        <taxon>lamiids</taxon>
        <taxon>Solanales</taxon>
        <taxon>Convolvulaceae</taxon>
        <taxon>Ipomoeeae</taxon>
        <taxon>Ipomoea</taxon>
    </lineage>
</organism>
<dbReference type="EC" id="1.14.11.61" evidence="3 4"/>
<dbReference type="EC" id="1.14.11.62" evidence="3 4"/>
<dbReference type="EMBL" id="AB636152">
    <property type="protein sequence ID" value="BAL22346.1"/>
    <property type="molecule type" value="mRNA"/>
</dbReference>
<dbReference type="SMR" id="G9M9M3"/>
<dbReference type="GO" id="GO:0016706">
    <property type="term" value="F:2-oxoglutarate-dependent dioxygenase activity"/>
    <property type="evidence" value="ECO:0000314"/>
    <property type="project" value="UniProtKB"/>
</dbReference>
<dbReference type="GO" id="GO:0102312">
    <property type="term" value="F:4-coumaroyl 2'-hydroxylase activity"/>
    <property type="evidence" value="ECO:0007669"/>
    <property type="project" value="UniProtKB-EC"/>
</dbReference>
<dbReference type="GO" id="GO:0046872">
    <property type="term" value="F:metal ion binding"/>
    <property type="evidence" value="ECO:0007669"/>
    <property type="project" value="UniProtKB-KW"/>
</dbReference>
<dbReference type="GO" id="GO:0009805">
    <property type="term" value="P:coumarin biosynthetic process"/>
    <property type="evidence" value="ECO:0000314"/>
    <property type="project" value="UniProtKB"/>
</dbReference>
<dbReference type="GO" id="GO:0009699">
    <property type="term" value="P:phenylpropanoid biosynthetic process"/>
    <property type="evidence" value="ECO:0000314"/>
    <property type="project" value="UniProtKB"/>
</dbReference>
<dbReference type="GO" id="GO:0009620">
    <property type="term" value="P:response to fungus"/>
    <property type="evidence" value="ECO:0000270"/>
    <property type="project" value="UniProtKB"/>
</dbReference>
<dbReference type="GO" id="GO:0002238">
    <property type="term" value="P:response to molecule of fungal origin"/>
    <property type="evidence" value="ECO:0000270"/>
    <property type="project" value="UniProtKB"/>
</dbReference>
<dbReference type="FunFam" id="2.60.120.330:FF:000023">
    <property type="entry name" value="Feruloyl CoA ortho-hydroxylase 1"/>
    <property type="match status" value="1"/>
</dbReference>
<dbReference type="Gene3D" id="2.60.120.330">
    <property type="entry name" value="B-lactam Antibiotic, Isopenicillin N Synthase, Chain"/>
    <property type="match status" value="1"/>
</dbReference>
<dbReference type="InterPro" id="IPR026992">
    <property type="entry name" value="DIOX_N"/>
</dbReference>
<dbReference type="InterPro" id="IPR044861">
    <property type="entry name" value="IPNS-like_FE2OG_OXY"/>
</dbReference>
<dbReference type="InterPro" id="IPR027443">
    <property type="entry name" value="IPNS-like_sf"/>
</dbReference>
<dbReference type="InterPro" id="IPR005123">
    <property type="entry name" value="Oxoglu/Fe-dep_dioxygenase_dom"/>
</dbReference>
<dbReference type="PANTHER" id="PTHR10209:SF243">
    <property type="entry name" value="FERULOYL COA ORTHO-HYDROXYLASE 1-RELATED"/>
    <property type="match status" value="1"/>
</dbReference>
<dbReference type="PANTHER" id="PTHR10209">
    <property type="entry name" value="OXIDOREDUCTASE, 2OG-FE II OXYGENASE FAMILY PROTEIN"/>
    <property type="match status" value="1"/>
</dbReference>
<dbReference type="Pfam" id="PF03171">
    <property type="entry name" value="2OG-FeII_Oxy"/>
    <property type="match status" value="1"/>
</dbReference>
<dbReference type="Pfam" id="PF14226">
    <property type="entry name" value="DIOX_N"/>
    <property type="match status" value="1"/>
</dbReference>
<dbReference type="SUPFAM" id="SSF51197">
    <property type="entry name" value="Clavaminate synthase-like"/>
    <property type="match status" value="1"/>
</dbReference>
<dbReference type="PROSITE" id="PS51471">
    <property type="entry name" value="FE2OG_OXY"/>
    <property type="match status" value="1"/>
</dbReference>
<name>F6H22_IPOBA</name>
<reference key="1">
    <citation type="journal article" date="2012" name="Phytochemistry">
        <title>Molecular cloning and functional analysis of the ortho-hydroxylases of p-coumaroyl coenzyme A/feruloyl coenzyme A involved in formation of umbelliferone and scopoletin in sweet potato, Ipomoea batatas (L.) Lam.</title>
        <authorList>
            <person name="Matsumoto S."/>
            <person name="Mizutani M."/>
            <person name="Sakata K."/>
            <person name="Shimizu B."/>
        </authorList>
    </citation>
    <scope>NUCLEOTIDE SEQUENCE [MRNA]</scope>
    <scope>FUNCTION</scope>
    <scope>CATALYTIC ACTIVITY</scope>
    <scope>BIOPHYSICOCHEMICAL PROPERTIES</scope>
    <scope>INDUCTION BY FUNGAL AND CHITOSAN TREATMENTS</scope>
    <scope>TISSUE SPECIFICITY</scope>
    <source>
        <tissue>Root tuber</tissue>
    </source>
</reference>
<feature type="chain" id="PRO_0000447357" description="Bi-functional coumaroyl CoA and feruloyl CoA ortho-hydroxylase F6H2-2-1">
    <location>
        <begin position="1"/>
        <end position="358"/>
    </location>
</feature>
<feature type="domain" description="Fe2OG dioxygenase" evidence="3">
    <location>
        <begin position="200"/>
        <end position="308"/>
    </location>
</feature>
<feature type="binding site" evidence="1">
    <location>
        <position position="216"/>
    </location>
    <ligand>
        <name>2-oxoglutarate</name>
        <dbReference type="ChEBI" id="CHEBI:16810"/>
    </ligand>
</feature>
<feature type="binding site" evidence="3">
    <location>
        <position position="231"/>
    </location>
    <ligand>
        <name>Fe cation</name>
        <dbReference type="ChEBI" id="CHEBI:24875"/>
    </ligand>
</feature>
<feature type="binding site" evidence="3">
    <location>
        <position position="233"/>
    </location>
    <ligand>
        <name>Fe cation</name>
        <dbReference type="ChEBI" id="CHEBI:24875"/>
    </ligand>
</feature>
<feature type="binding site" evidence="3">
    <location>
        <position position="289"/>
    </location>
    <ligand>
        <name>Fe cation</name>
        <dbReference type="ChEBI" id="CHEBI:24875"/>
    </ligand>
</feature>
<feature type="binding site" evidence="3">
    <location>
        <position position="299"/>
    </location>
    <ligand>
        <name>2-oxoglutarate</name>
        <dbReference type="ChEBI" id="CHEBI:16810"/>
    </ligand>
</feature>
<feature type="binding site" evidence="1">
    <location>
        <position position="301"/>
    </location>
    <ligand>
        <name>2-oxoglutarate</name>
        <dbReference type="ChEBI" id="CHEBI:16810"/>
    </ligand>
</feature>
<comment type="function">
    <text evidence="4">2-oxoglutarate (OG)- and Fe(II)-dependent dioxygenase (2OGD) involved in scopoletin and umbelliferone biosynthesis (PubMed:22169019). Converts feruloyl CoA into 6'-hydroxyferuloyl CoA, and p-coumaroyl CoA into 2,4-dihydroxycinnamoyl-CoA, but has no activity toward caffeoyl-CoA (PubMed:22169019).</text>
</comment>
<comment type="catalytic activity">
    <reaction evidence="4">
        <text>(E)-4-coumaroyl-CoA + 2-oxoglutarate + O2 = (E)-2,4-dihydroxycinnamoyl-CoA + succinate + CO2</text>
        <dbReference type="Rhea" id="RHEA:57868"/>
        <dbReference type="ChEBI" id="CHEBI:15379"/>
        <dbReference type="ChEBI" id="CHEBI:16526"/>
        <dbReference type="ChEBI" id="CHEBI:16810"/>
        <dbReference type="ChEBI" id="CHEBI:30031"/>
        <dbReference type="ChEBI" id="CHEBI:85008"/>
        <dbReference type="ChEBI" id="CHEBI:142398"/>
        <dbReference type="EC" id="1.14.11.62"/>
    </reaction>
</comment>
<comment type="catalytic activity">
    <reaction evidence="4">
        <text>(E)-feruloyl-CoA + 2-oxoglutarate + O2 = (E)-6-hydroxyferuloyl-CoA + succinate + CO2</text>
        <dbReference type="Rhea" id="RHEA:57856"/>
        <dbReference type="ChEBI" id="CHEBI:15379"/>
        <dbReference type="ChEBI" id="CHEBI:16526"/>
        <dbReference type="ChEBI" id="CHEBI:16810"/>
        <dbReference type="ChEBI" id="CHEBI:30031"/>
        <dbReference type="ChEBI" id="CHEBI:87305"/>
        <dbReference type="ChEBI" id="CHEBI:142390"/>
        <dbReference type="EC" id="1.14.11.61"/>
    </reaction>
</comment>
<comment type="cofactor">
    <cofactor evidence="2">
        <name>L-ascorbate</name>
        <dbReference type="ChEBI" id="CHEBI:38290"/>
    </cofactor>
</comment>
<comment type="cofactor">
    <cofactor evidence="3">
        <name>Fe(2+)</name>
        <dbReference type="ChEBI" id="CHEBI:29033"/>
    </cofactor>
    <text evidence="3">Binds 1 Fe(2+) ion per subunit.</text>
</comment>
<comment type="biophysicochemical properties">
    <kinetics>
        <KM evidence="4">7.46 uM for feruloyl-CoA</KM>
        <KM evidence="4">6.12 uM for p-Coumaroyl-CoA</KM>
        <text evidence="4">kcat is 0.35 sec(-1) with feruloyl-CoA as substrate. kcat is 0.33 sec(-1) with p-Coumaroyl-CoA as substrate.</text>
    </kinetics>
    <phDependence>
        <text evidence="4">Optimum pH is 7.2.</text>
    </phDependence>
</comment>
<comment type="pathway">
    <text evidence="4">Phenylpropanoid metabolism.</text>
</comment>
<comment type="tissue specificity">
    <text evidence="4">Mostly expressed in underground stems and stems.</text>
</comment>
<comment type="induction">
    <text evidence="4">Transiently induced by fungal (F.oxysporum f.sp. batatas O-17) and chitosan treatments, in association with the accumulation of umbelliferone and its glucoside (skimmin) in the tubers.</text>
</comment>
<comment type="similarity">
    <text evidence="6">Belongs to the iron/ascorbate-dependent oxidoreductase family.</text>
</comment>
<accession>G9M9M3</accession>
<proteinExistence type="evidence at protein level"/>